<dbReference type="EC" id="7.1.1.-" evidence="1"/>
<dbReference type="EMBL" id="DQ886273">
    <property type="protein sequence ID" value="ABH88133.1"/>
    <property type="molecule type" value="Genomic_DNA"/>
</dbReference>
<dbReference type="EMBL" id="EU196765">
    <property type="protein sequence ID" value="ABW22813.1"/>
    <property type="molecule type" value="Genomic_DNA"/>
</dbReference>
<dbReference type="RefSeq" id="YP_001122852.1">
    <property type="nucleotide sequence ID" value="NC_009259.1"/>
</dbReference>
<dbReference type="SMR" id="A4GGF1"/>
<dbReference type="GeneID" id="4961812"/>
<dbReference type="KEGG" id="pvu:4961812"/>
<dbReference type="GO" id="GO:0009535">
    <property type="term" value="C:chloroplast thylakoid membrane"/>
    <property type="evidence" value="ECO:0007669"/>
    <property type="project" value="UniProtKB-SubCell"/>
</dbReference>
<dbReference type="GO" id="GO:0003954">
    <property type="term" value="F:NADH dehydrogenase activity"/>
    <property type="evidence" value="ECO:0007669"/>
    <property type="project" value="TreeGrafter"/>
</dbReference>
<dbReference type="GO" id="GO:0016655">
    <property type="term" value="F:oxidoreductase activity, acting on NAD(P)H, quinone or similar compound as acceptor"/>
    <property type="evidence" value="ECO:0007669"/>
    <property type="project" value="UniProtKB-UniRule"/>
</dbReference>
<dbReference type="GO" id="GO:0048038">
    <property type="term" value="F:quinone binding"/>
    <property type="evidence" value="ECO:0007669"/>
    <property type="project" value="UniProtKB-KW"/>
</dbReference>
<dbReference type="GO" id="GO:0009060">
    <property type="term" value="P:aerobic respiration"/>
    <property type="evidence" value="ECO:0007669"/>
    <property type="project" value="TreeGrafter"/>
</dbReference>
<dbReference type="GO" id="GO:0019684">
    <property type="term" value="P:photosynthesis, light reaction"/>
    <property type="evidence" value="ECO:0007669"/>
    <property type="project" value="UniProtKB-UniRule"/>
</dbReference>
<dbReference type="HAMAP" id="MF_01350">
    <property type="entry name" value="NDH1_NuoH"/>
    <property type="match status" value="1"/>
</dbReference>
<dbReference type="InterPro" id="IPR001694">
    <property type="entry name" value="NADH_UbQ_OxRdtase_su1/FPO"/>
</dbReference>
<dbReference type="InterPro" id="IPR018086">
    <property type="entry name" value="NADH_UbQ_OxRdtase_su1_CS"/>
</dbReference>
<dbReference type="NCBIfam" id="NF004741">
    <property type="entry name" value="PRK06076.1-2"/>
    <property type="match status" value="1"/>
</dbReference>
<dbReference type="PANTHER" id="PTHR11432">
    <property type="entry name" value="NADH DEHYDROGENASE SUBUNIT 1"/>
    <property type="match status" value="1"/>
</dbReference>
<dbReference type="PANTHER" id="PTHR11432:SF3">
    <property type="entry name" value="NADH-UBIQUINONE OXIDOREDUCTASE CHAIN 1"/>
    <property type="match status" value="1"/>
</dbReference>
<dbReference type="Pfam" id="PF00146">
    <property type="entry name" value="NADHdh"/>
    <property type="match status" value="1"/>
</dbReference>
<dbReference type="PROSITE" id="PS00667">
    <property type="entry name" value="COMPLEX1_ND1_1"/>
    <property type="match status" value="1"/>
</dbReference>
<dbReference type="PROSITE" id="PS00668">
    <property type="entry name" value="COMPLEX1_ND1_2"/>
    <property type="match status" value="1"/>
</dbReference>
<reference key="1">
    <citation type="journal article" date="2007" name="BMC Genomics">
        <title>Rapid evolutionary change of common bean (Phaseolus vulgaris L) plastome, and the genomic diversification of legume chloroplasts.</title>
        <authorList>
            <person name="Guo X."/>
            <person name="Castillo-Ramirez S."/>
            <person name="Gonzalez V."/>
            <person name="Bustos P."/>
            <person name="Fernandez-Vazquez J.L."/>
            <person name="Santamaria R.I."/>
            <person name="Arellano J."/>
            <person name="Cevallos M.A."/>
            <person name="Davila G."/>
        </authorList>
    </citation>
    <scope>NUCLEOTIDE SEQUENCE [LARGE SCALE GENOMIC DNA]</scope>
    <source>
        <strain>cv. Negro Jamapa</strain>
    </source>
</reference>
<reference key="2">
    <citation type="submission" date="2007-10" db="EMBL/GenBank/DDBJ databases">
        <title>Complete nucleotide sequence of the plastid genome of the common bean, Phaseolus vulgaris.</title>
        <authorList>
            <person name="Moore M.J."/>
            <person name="Triplett E.W."/>
            <person name="Broughton W.J."/>
            <person name="Soltis P.S."/>
            <person name="Soltis D.E."/>
        </authorList>
    </citation>
    <scope>NUCLEOTIDE SEQUENCE [LARGE SCALE GENOMIC DNA]</scope>
</reference>
<keyword id="KW-0150">Chloroplast</keyword>
<keyword id="KW-0472">Membrane</keyword>
<keyword id="KW-0520">NAD</keyword>
<keyword id="KW-0521">NADP</keyword>
<keyword id="KW-0934">Plastid</keyword>
<keyword id="KW-0618">Plastoquinone</keyword>
<keyword id="KW-0874">Quinone</keyword>
<keyword id="KW-0793">Thylakoid</keyword>
<keyword id="KW-1278">Translocase</keyword>
<keyword id="KW-0812">Transmembrane</keyword>
<keyword id="KW-1133">Transmembrane helix</keyword>
<geneLocation type="chloroplast"/>
<evidence type="ECO:0000255" key="1">
    <source>
        <dbReference type="HAMAP-Rule" id="MF_01350"/>
    </source>
</evidence>
<comment type="function">
    <text evidence="1">NDH shuttles electrons from NAD(P)H:plastoquinone, via FMN and iron-sulfur (Fe-S) centers, to quinones in the photosynthetic chain and possibly in a chloroplast respiratory chain. The immediate electron acceptor for the enzyme in this species is believed to be plastoquinone. Couples the redox reaction to proton translocation, and thus conserves the redox energy in a proton gradient.</text>
</comment>
<comment type="catalytic activity">
    <reaction evidence="1">
        <text>a plastoquinone + NADH + (n+1) H(+)(in) = a plastoquinol + NAD(+) + n H(+)(out)</text>
        <dbReference type="Rhea" id="RHEA:42608"/>
        <dbReference type="Rhea" id="RHEA-COMP:9561"/>
        <dbReference type="Rhea" id="RHEA-COMP:9562"/>
        <dbReference type="ChEBI" id="CHEBI:15378"/>
        <dbReference type="ChEBI" id="CHEBI:17757"/>
        <dbReference type="ChEBI" id="CHEBI:57540"/>
        <dbReference type="ChEBI" id="CHEBI:57945"/>
        <dbReference type="ChEBI" id="CHEBI:62192"/>
    </reaction>
</comment>
<comment type="catalytic activity">
    <reaction evidence="1">
        <text>a plastoquinone + NADPH + (n+1) H(+)(in) = a plastoquinol + NADP(+) + n H(+)(out)</text>
        <dbReference type="Rhea" id="RHEA:42612"/>
        <dbReference type="Rhea" id="RHEA-COMP:9561"/>
        <dbReference type="Rhea" id="RHEA-COMP:9562"/>
        <dbReference type="ChEBI" id="CHEBI:15378"/>
        <dbReference type="ChEBI" id="CHEBI:17757"/>
        <dbReference type="ChEBI" id="CHEBI:57783"/>
        <dbReference type="ChEBI" id="CHEBI:58349"/>
        <dbReference type="ChEBI" id="CHEBI:62192"/>
    </reaction>
</comment>
<comment type="subunit">
    <text evidence="1">NDH is composed of at least 16 different subunits, 5 of which are encoded in the nucleus.</text>
</comment>
<comment type="subcellular location">
    <subcellularLocation>
        <location evidence="1">Plastid</location>
        <location evidence="1">Chloroplast thylakoid membrane</location>
        <topology evidence="1">Multi-pass membrane protein</topology>
    </subcellularLocation>
</comment>
<comment type="similarity">
    <text evidence="1">Belongs to the complex I subunit 1 family.</text>
</comment>
<proteinExistence type="inferred from homology"/>
<sequence>MIIDLTEIQDIHFFFRLEFFKEIYEILWVFVPILIFIVGITISVLAIVWLEREISAGIQQRIGPEYTGPFGVLQALADGTKLLFKENLIPSRGDIRLFSFGPAISVISIILSYSVIPFGYNFVLSDLNIGVFLWIAISSIAPIGLLMSGYGSNNKYSFLGGLRAAAQSISYEIPLTLCVLSISLLSNSLSTVDIVDAQSKYGFWGWNLWRQPMGFLVFLISSLAECERLPFDLPEAEEELIAGYQTEYSGIKFGLFYVASYLNLLVSSLFVTVLYLGGSNISIPYIFVSNFFEINKTYGVFVTIIGIFITLVKTFLFIFVSITTRWTLPRLRIDQLLNLGWKFLLPISLGNLLLTTSSQLFSL</sequence>
<gene>
    <name evidence="1" type="primary">ndhA</name>
</gene>
<name>NU1C_PHAVU</name>
<feature type="chain" id="PRO_0000298878" description="NAD(P)H-quinone oxidoreductase subunit 1, chloroplastic">
    <location>
        <begin position="1"/>
        <end position="363"/>
    </location>
</feature>
<feature type="transmembrane region" description="Helical" evidence="1">
    <location>
        <begin position="28"/>
        <end position="48"/>
    </location>
</feature>
<feature type="transmembrane region" description="Helical" evidence="1">
    <location>
        <begin position="98"/>
        <end position="118"/>
    </location>
</feature>
<feature type="transmembrane region" description="Helical" evidence="1">
    <location>
        <begin position="129"/>
        <end position="149"/>
    </location>
</feature>
<feature type="transmembrane region" description="Helical" evidence="1">
    <location>
        <begin position="253"/>
        <end position="273"/>
    </location>
</feature>
<feature type="transmembrane region" description="Helical" evidence="1">
    <location>
        <begin position="300"/>
        <end position="320"/>
    </location>
</feature>
<feature type="transmembrane region" description="Helical" evidence="1">
    <location>
        <begin position="336"/>
        <end position="356"/>
    </location>
</feature>
<organism>
    <name type="scientific">Phaseolus vulgaris</name>
    <name type="common">Kidney bean</name>
    <name type="synonym">French bean</name>
    <dbReference type="NCBI Taxonomy" id="3885"/>
    <lineage>
        <taxon>Eukaryota</taxon>
        <taxon>Viridiplantae</taxon>
        <taxon>Streptophyta</taxon>
        <taxon>Embryophyta</taxon>
        <taxon>Tracheophyta</taxon>
        <taxon>Spermatophyta</taxon>
        <taxon>Magnoliopsida</taxon>
        <taxon>eudicotyledons</taxon>
        <taxon>Gunneridae</taxon>
        <taxon>Pentapetalae</taxon>
        <taxon>rosids</taxon>
        <taxon>fabids</taxon>
        <taxon>Fabales</taxon>
        <taxon>Fabaceae</taxon>
        <taxon>Papilionoideae</taxon>
        <taxon>50 kb inversion clade</taxon>
        <taxon>NPAAA clade</taxon>
        <taxon>indigoferoid/millettioid clade</taxon>
        <taxon>Phaseoleae</taxon>
        <taxon>Phaseolus</taxon>
    </lineage>
</organism>
<protein>
    <recommendedName>
        <fullName evidence="1">NAD(P)H-quinone oxidoreductase subunit 1, chloroplastic</fullName>
        <ecNumber evidence="1">7.1.1.-</ecNumber>
    </recommendedName>
    <alternativeName>
        <fullName evidence="1">NAD(P)H dehydrogenase subunit 1</fullName>
        <shortName evidence="1">NDH subunit 1</shortName>
    </alternativeName>
    <alternativeName>
        <fullName evidence="1">NADH-plastoquinone oxidoreductase subunit 1</fullName>
    </alternativeName>
</protein>
<accession>A4GGF1</accession>
<accession>A8W843</accession>